<keyword id="KW-0066">ATP synthesis</keyword>
<keyword id="KW-0997">Cell inner membrane</keyword>
<keyword id="KW-1003">Cell membrane</keyword>
<keyword id="KW-0139">CF(1)</keyword>
<keyword id="KW-0375">Hydrogen ion transport</keyword>
<keyword id="KW-0406">Ion transport</keyword>
<keyword id="KW-0472">Membrane</keyword>
<keyword id="KW-0813">Transport</keyword>
<protein>
    <recommendedName>
        <fullName evidence="1">ATP synthase gamma chain</fullName>
    </recommendedName>
    <alternativeName>
        <fullName evidence="1">ATP synthase F1 sector gamma subunit</fullName>
    </alternativeName>
    <alternativeName>
        <fullName evidence="1">F-ATPase gamma subunit</fullName>
    </alternativeName>
</protein>
<accession>A6W3S9</accession>
<evidence type="ECO:0000255" key="1">
    <source>
        <dbReference type="HAMAP-Rule" id="MF_00815"/>
    </source>
</evidence>
<proteinExistence type="inferred from homology"/>
<reference key="1">
    <citation type="submission" date="2007-06" db="EMBL/GenBank/DDBJ databases">
        <title>Complete sequence of Marinomonas sp. MWYL1.</title>
        <authorList>
            <consortium name="US DOE Joint Genome Institute"/>
            <person name="Copeland A."/>
            <person name="Lucas S."/>
            <person name="Lapidus A."/>
            <person name="Barry K."/>
            <person name="Glavina del Rio T."/>
            <person name="Dalin E."/>
            <person name="Tice H."/>
            <person name="Pitluck S."/>
            <person name="Kiss H."/>
            <person name="Brettin T."/>
            <person name="Bruce D."/>
            <person name="Detter J.C."/>
            <person name="Han C."/>
            <person name="Schmutz J."/>
            <person name="Larimer F."/>
            <person name="Land M."/>
            <person name="Hauser L."/>
            <person name="Kyrpides N."/>
            <person name="Kim E."/>
            <person name="Johnston A.W.B."/>
            <person name="Todd J.D."/>
            <person name="Rogers R."/>
            <person name="Wexler M."/>
            <person name="Bond P.L."/>
            <person name="Li Y."/>
            <person name="Richardson P."/>
        </authorList>
    </citation>
    <scope>NUCLEOTIDE SEQUENCE [LARGE SCALE GENOMIC DNA]</scope>
    <source>
        <strain>MWYL1</strain>
    </source>
</reference>
<name>ATPG_MARMS</name>
<comment type="function">
    <text evidence="1">Produces ATP from ADP in the presence of a proton gradient across the membrane. The gamma chain is believed to be important in regulating ATPase activity and the flow of protons through the CF(0) complex.</text>
</comment>
<comment type="subunit">
    <text evidence="1">F-type ATPases have 2 components, CF(1) - the catalytic core - and CF(0) - the membrane proton channel. CF(1) has five subunits: alpha(3), beta(3), gamma(1), delta(1), epsilon(1). CF(0) has three main subunits: a, b and c.</text>
</comment>
<comment type="subcellular location">
    <subcellularLocation>
        <location evidence="1">Cell inner membrane</location>
        <topology evidence="1">Peripheral membrane protein</topology>
    </subcellularLocation>
</comment>
<comment type="similarity">
    <text evidence="1">Belongs to the ATPase gamma chain family.</text>
</comment>
<organism>
    <name type="scientific">Marinomonas sp. (strain MWYL1)</name>
    <dbReference type="NCBI Taxonomy" id="400668"/>
    <lineage>
        <taxon>Bacteria</taxon>
        <taxon>Pseudomonadati</taxon>
        <taxon>Pseudomonadota</taxon>
        <taxon>Gammaproteobacteria</taxon>
        <taxon>Oceanospirillales</taxon>
        <taxon>Oceanospirillaceae</taxon>
        <taxon>Marinomonas</taxon>
    </lineage>
</organism>
<sequence length="286" mass="31785">MAVGKEIRTQISSINNTRKITRAMEKVAASKTRKAQDRMAASRPYAERIRQVVGHLANANPEYKHRYLTEREAKRVGYIVISSDRGLCGGLNVNVFKKAIRDMKQFADTGVEIDICAIGSKAVSFFRNYGGNVTAAHTGLGDAPKADDLVGSVKVMLDAFDEGRIDRLYVVSNEFVNTMTQNPTVEQLLPLKAEENTELKHHWDYIYEPEAVEILDELLVRYIESQVYQSVVENIACEQAARMLAMKNATDNAGDIIDELQLVYNKARQAAITQEISEIVSGAAAV</sequence>
<feature type="chain" id="PRO_1000083793" description="ATP synthase gamma chain">
    <location>
        <begin position="1"/>
        <end position="286"/>
    </location>
</feature>
<dbReference type="EMBL" id="CP000749">
    <property type="protein sequence ID" value="ABR73358.1"/>
    <property type="molecule type" value="Genomic_DNA"/>
</dbReference>
<dbReference type="SMR" id="A6W3S9"/>
<dbReference type="STRING" id="400668.Mmwyl1_4463"/>
<dbReference type="KEGG" id="mmw:Mmwyl1_4463"/>
<dbReference type="eggNOG" id="COG0224">
    <property type="taxonomic scope" value="Bacteria"/>
</dbReference>
<dbReference type="HOGENOM" id="CLU_050669_0_1_6"/>
<dbReference type="OrthoDB" id="9812769at2"/>
<dbReference type="GO" id="GO:0005886">
    <property type="term" value="C:plasma membrane"/>
    <property type="evidence" value="ECO:0007669"/>
    <property type="project" value="UniProtKB-SubCell"/>
</dbReference>
<dbReference type="GO" id="GO:0045259">
    <property type="term" value="C:proton-transporting ATP synthase complex"/>
    <property type="evidence" value="ECO:0007669"/>
    <property type="project" value="UniProtKB-KW"/>
</dbReference>
<dbReference type="GO" id="GO:0005524">
    <property type="term" value="F:ATP binding"/>
    <property type="evidence" value="ECO:0007669"/>
    <property type="project" value="UniProtKB-UniRule"/>
</dbReference>
<dbReference type="GO" id="GO:0046933">
    <property type="term" value="F:proton-transporting ATP synthase activity, rotational mechanism"/>
    <property type="evidence" value="ECO:0007669"/>
    <property type="project" value="UniProtKB-UniRule"/>
</dbReference>
<dbReference type="GO" id="GO:0042777">
    <property type="term" value="P:proton motive force-driven plasma membrane ATP synthesis"/>
    <property type="evidence" value="ECO:0007669"/>
    <property type="project" value="UniProtKB-UniRule"/>
</dbReference>
<dbReference type="CDD" id="cd12151">
    <property type="entry name" value="F1-ATPase_gamma"/>
    <property type="match status" value="1"/>
</dbReference>
<dbReference type="FunFam" id="1.10.287.80:FF:000005">
    <property type="entry name" value="ATP synthase gamma chain"/>
    <property type="match status" value="1"/>
</dbReference>
<dbReference type="FunFam" id="3.40.1380.10:FF:000001">
    <property type="entry name" value="ATP synthase gamma chain"/>
    <property type="match status" value="1"/>
</dbReference>
<dbReference type="Gene3D" id="3.40.1380.10">
    <property type="match status" value="1"/>
</dbReference>
<dbReference type="Gene3D" id="1.10.287.80">
    <property type="entry name" value="ATP synthase, gamma subunit, helix hairpin domain"/>
    <property type="match status" value="1"/>
</dbReference>
<dbReference type="HAMAP" id="MF_00815">
    <property type="entry name" value="ATP_synth_gamma_bact"/>
    <property type="match status" value="1"/>
</dbReference>
<dbReference type="InterPro" id="IPR035968">
    <property type="entry name" value="ATP_synth_F1_ATPase_gsu"/>
</dbReference>
<dbReference type="InterPro" id="IPR000131">
    <property type="entry name" value="ATP_synth_F1_gsu"/>
</dbReference>
<dbReference type="InterPro" id="IPR023632">
    <property type="entry name" value="ATP_synth_F1_gsu_CS"/>
</dbReference>
<dbReference type="NCBIfam" id="TIGR01146">
    <property type="entry name" value="ATPsyn_F1gamma"/>
    <property type="match status" value="1"/>
</dbReference>
<dbReference type="NCBIfam" id="NF004144">
    <property type="entry name" value="PRK05621.1-1"/>
    <property type="match status" value="1"/>
</dbReference>
<dbReference type="PANTHER" id="PTHR11693">
    <property type="entry name" value="ATP SYNTHASE GAMMA CHAIN"/>
    <property type="match status" value="1"/>
</dbReference>
<dbReference type="PANTHER" id="PTHR11693:SF22">
    <property type="entry name" value="ATP SYNTHASE SUBUNIT GAMMA, MITOCHONDRIAL"/>
    <property type="match status" value="1"/>
</dbReference>
<dbReference type="Pfam" id="PF00231">
    <property type="entry name" value="ATP-synt"/>
    <property type="match status" value="1"/>
</dbReference>
<dbReference type="PRINTS" id="PR00126">
    <property type="entry name" value="ATPASEGAMMA"/>
</dbReference>
<dbReference type="SUPFAM" id="SSF52943">
    <property type="entry name" value="ATP synthase (F1-ATPase), gamma subunit"/>
    <property type="match status" value="1"/>
</dbReference>
<dbReference type="PROSITE" id="PS00153">
    <property type="entry name" value="ATPASE_GAMMA"/>
    <property type="match status" value="1"/>
</dbReference>
<gene>
    <name evidence="1" type="primary">atpG</name>
    <name type="ordered locus">Mmwyl1_4463</name>
</gene>